<reference key="1">
    <citation type="submission" date="2003-12" db="EMBL/GenBank/DDBJ databases">
        <title>Bats and birds: flying in the face of mtDNA evolutionary rates.</title>
        <authorList>
            <person name="Worthington Wilmer J.M."/>
            <person name="Schneider C.J."/>
            <person name="Sorenson M.D."/>
        </authorList>
    </citation>
    <scope>NUCLEOTIDE SEQUENCE [GENOMIC DNA]</scope>
    <source>
        <strain>Isolate ET1</strain>
    </source>
</reference>
<accession>Q330B2</accession>
<protein>
    <recommendedName>
        <fullName evidence="1">NADH-ubiquinone oxidoreductase chain 2</fullName>
        <ecNumber evidence="1">7.1.1.2</ecNumber>
    </recommendedName>
    <alternativeName>
        <fullName>NADH dehydrogenase subunit 2</fullName>
    </alternativeName>
</protein>
<geneLocation type="mitochondrion"/>
<gene>
    <name evidence="1" type="primary">MT-ND2</name>
    <name type="synonym">MTND2</name>
    <name type="synonym">NADH2</name>
    <name type="synonym">ND2</name>
</gene>
<comment type="function">
    <text evidence="1">Core subunit of the mitochondrial membrane respiratory chain NADH dehydrogenase (Complex I) which catalyzes electron transfer from NADH through the respiratory chain, using ubiquinone as an electron acceptor. Essential for the catalytic activity and assembly of complex I.</text>
</comment>
<comment type="catalytic activity">
    <reaction evidence="1">
        <text>a ubiquinone + NADH + 5 H(+)(in) = a ubiquinol + NAD(+) + 4 H(+)(out)</text>
        <dbReference type="Rhea" id="RHEA:29091"/>
        <dbReference type="Rhea" id="RHEA-COMP:9565"/>
        <dbReference type="Rhea" id="RHEA-COMP:9566"/>
        <dbReference type="ChEBI" id="CHEBI:15378"/>
        <dbReference type="ChEBI" id="CHEBI:16389"/>
        <dbReference type="ChEBI" id="CHEBI:17976"/>
        <dbReference type="ChEBI" id="CHEBI:57540"/>
        <dbReference type="ChEBI" id="CHEBI:57945"/>
        <dbReference type="EC" id="7.1.1.2"/>
    </reaction>
</comment>
<comment type="subunit">
    <text evidence="1 2">Core subunit of respiratory chain NADH dehydrogenase (Complex I) which is composed of 45 different subunits. Interacts with TMEM242 (By similarity).</text>
</comment>
<comment type="subcellular location">
    <subcellularLocation>
        <location evidence="2">Mitochondrion inner membrane</location>
        <topology evidence="3">Multi-pass membrane protein</topology>
    </subcellularLocation>
</comment>
<comment type="similarity">
    <text evidence="4">Belongs to the complex I subunit 2 family.</text>
</comment>
<evidence type="ECO:0000250" key="1">
    <source>
        <dbReference type="UniProtKB" id="P03891"/>
    </source>
</evidence>
<evidence type="ECO:0000250" key="2">
    <source>
        <dbReference type="UniProtKB" id="P03892"/>
    </source>
</evidence>
<evidence type="ECO:0000255" key="3"/>
<evidence type="ECO:0000305" key="4"/>
<organism>
    <name type="scientific">Thyroptera tricolor</name>
    <name type="common">Spix's disk-winged bat</name>
    <dbReference type="NCBI Taxonomy" id="124759"/>
    <lineage>
        <taxon>Eukaryota</taxon>
        <taxon>Metazoa</taxon>
        <taxon>Chordata</taxon>
        <taxon>Craniata</taxon>
        <taxon>Vertebrata</taxon>
        <taxon>Euteleostomi</taxon>
        <taxon>Mammalia</taxon>
        <taxon>Eutheria</taxon>
        <taxon>Laurasiatheria</taxon>
        <taxon>Chiroptera</taxon>
        <taxon>Yangochiroptera</taxon>
        <taxon>Thyropteridae</taxon>
        <taxon>Thyroptera</taxon>
    </lineage>
</organism>
<sequence length="348" mass="39256">MNPIIISMIGFTIILGTTIVLMSSHWFMIWIGFEMNMLAIIPVLMKSHHPRSTEASTKYFLTQTTASMLMLLSVMINLIYTGQWTAMKLANPTASTIMTLSLAMKLGLSPFHFWVPEVTQGIPLTSGLILLTWQKLAPLSVLYIASPNLNMTMLLTMSILSVVMGGWGGLNQTQLRKILAFSSIAHMGWMTAIIMFNPTLTLLNLLLYILMTTTIFMILIFTKSTTTLSISYMWNKTPIMTVIMLTILMSLGGLPPLSGFMPKWMIIQELTKNNNIALALIMAMSALLNLYFYMRLMYATTLTMFPSSNNIKMKWYYTNNLPTKYLPTLTIMSTLLLPLTPMMMMLLN</sequence>
<feature type="chain" id="PRO_0000226718" description="NADH-ubiquinone oxidoreductase chain 2">
    <location>
        <begin position="1"/>
        <end position="348"/>
    </location>
</feature>
<feature type="transmembrane region" description="Helical" evidence="3">
    <location>
        <begin position="3"/>
        <end position="23"/>
    </location>
</feature>
<feature type="transmembrane region" description="Helical" evidence="3">
    <location>
        <begin position="25"/>
        <end position="45"/>
    </location>
</feature>
<feature type="transmembrane region" description="Helical" evidence="3">
    <location>
        <begin position="59"/>
        <end position="79"/>
    </location>
</feature>
<feature type="transmembrane region" description="Helical" evidence="3">
    <location>
        <begin position="93"/>
        <end position="115"/>
    </location>
</feature>
<feature type="transmembrane region" description="Helical" evidence="3">
    <location>
        <begin position="149"/>
        <end position="169"/>
    </location>
</feature>
<feature type="transmembrane region" description="Helical" evidence="3">
    <location>
        <begin position="178"/>
        <end position="198"/>
    </location>
</feature>
<feature type="transmembrane region" description="Helical" evidence="3">
    <location>
        <begin position="201"/>
        <end position="221"/>
    </location>
</feature>
<feature type="transmembrane region" description="Helical" evidence="3">
    <location>
        <begin position="239"/>
        <end position="259"/>
    </location>
</feature>
<feature type="transmembrane region" description="Helical" evidence="3">
    <location>
        <begin position="276"/>
        <end position="296"/>
    </location>
</feature>
<feature type="transmembrane region" description="Helical" evidence="3">
    <location>
        <begin position="326"/>
        <end position="346"/>
    </location>
</feature>
<dbReference type="EC" id="7.1.1.2" evidence="1"/>
<dbReference type="EMBL" id="AY504580">
    <property type="protein sequence ID" value="AAS91445.1"/>
    <property type="molecule type" value="Genomic_DNA"/>
</dbReference>
<dbReference type="SMR" id="Q330B2"/>
<dbReference type="GO" id="GO:0005743">
    <property type="term" value="C:mitochondrial inner membrane"/>
    <property type="evidence" value="ECO:0000250"/>
    <property type="project" value="UniProtKB"/>
</dbReference>
<dbReference type="GO" id="GO:0008137">
    <property type="term" value="F:NADH dehydrogenase (ubiquinone) activity"/>
    <property type="evidence" value="ECO:0000250"/>
    <property type="project" value="UniProtKB"/>
</dbReference>
<dbReference type="GO" id="GO:0006120">
    <property type="term" value="P:mitochondrial electron transport, NADH to ubiquinone"/>
    <property type="evidence" value="ECO:0000250"/>
    <property type="project" value="UniProtKB"/>
</dbReference>
<dbReference type="GO" id="GO:0032981">
    <property type="term" value="P:mitochondrial respiratory chain complex I assembly"/>
    <property type="evidence" value="ECO:0000250"/>
    <property type="project" value="UniProtKB"/>
</dbReference>
<dbReference type="InterPro" id="IPR050175">
    <property type="entry name" value="Complex_I_Subunit_2"/>
</dbReference>
<dbReference type="InterPro" id="IPR010933">
    <property type="entry name" value="NADH_DH_su2_C"/>
</dbReference>
<dbReference type="InterPro" id="IPR003917">
    <property type="entry name" value="NADH_UbQ_OxRdtase_chain2"/>
</dbReference>
<dbReference type="InterPro" id="IPR001750">
    <property type="entry name" value="ND/Mrp_TM"/>
</dbReference>
<dbReference type="PANTHER" id="PTHR46552">
    <property type="entry name" value="NADH-UBIQUINONE OXIDOREDUCTASE CHAIN 2"/>
    <property type="match status" value="1"/>
</dbReference>
<dbReference type="PANTHER" id="PTHR46552:SF1">
    <property type="entry name" value="NADH-UBIQUINONE OXIDOREDUCTASE CHAIN 2"/>
    <property type="match status" value="1"/>
</dbReference>
<dbReference type="Pfam" id="PF06444">
    <property type="entry name" value="NADH_dehy_S2_C"/>
    <property type="match status" value="1"/>
</dbReference>
<dbReference type="Pfam" id="PF00361">
    <property type="entry name" value="Proton_antipo_M"/>
    <property type="match status" value="1"/>
</dbReference>
<dbReference type="PRINTS" id="PR01436">
    <property type="entry name" value="NADHDHGNASE2"/>
</dbReference>
<keyword id="KW-0249">Electron transport</keyword>
<keyword id="KW-0472">Membrane</keyword>
<keyword id="KW-0496">Mitochondrion</keyword>
<keyword id="KW-0999">Mitochondrion inner membrane</keyword>
<keyword id="KW-0520">NAD</keyword>
<keyword id="KW-0679">Respiratory chain</keyword>
<keyword id="KW-1278">Translocase</keyword>
<keyword id="KW-0812">Transmembrane</keyword>
<keyword id="KW-1133">Transmembrane helix</keyword>
<keyword id="KW-0813">Transport</keyword>
<keyword id="KW-0830">Ubiquinone</keyword>
<name>NU2M_THYTR</name>
<proteinExistence type="inferred from homology"/>